<dbReference type="EMBL" id="BC102426">
    <property type="protein sequence ID" value="AAI02427.1"/>
    <property type="molecule type" value="mRNA"/>
</dbReference>
<dbReference type="RefSeq" id="NP_001107196.1">
    <property type="nucleotide sequence ID" value="NM_001113724.2"/>
</dbReference>
<dbReference type="RefSeq" id="XP_005221122.1">
    <property type="nucleotide sequence ID" value="XM_005221065.5"/>
</dbReference>
<dbReference type="RefSeq" id="XP_010814773.1">
    <property type="nucleotide sequence ID" value="XM_010816471.4"/>
</dbReference>
<dbReference type="RefSeq" id="XP_010814774.1">
    <property type="nucleotide sequence ID" value="XM_010816472.4"/>
</dbReference>
<dbReference type="BMRB" id="Q3ZCF6"/>
<dbReference type="SMR" id="Q3ZCF6"/>
<dbReference type="FunCoup" id="Q3ZCF6">
    <property type="interactions" value="1270"/>
</dbReference>
<dbReference type="STRING" id="9913.ENSBTAP00000018478"/>
<dbReference type="PaxDb" id="9913-ENSBTAP00000018478"/>
<dbReference type="Ensembl" id="ENSBTAT00000018478.4">
    <property type="protein sequence ID" value="ENSBTAP00000018478.3"/>
    <property type="gene ID" value="ENSBTAG00000001937.5"/>
</dbReference>
<dbReference type="GeneID" id="616275"/>
<dbReference type="KEGG" id="bta:616275"/>
<dbReference type="CTD" id="51529"/>
<dbReference type="VEuPathDB" id="HostDB:ENSBTAG00000001937"/>
<dbReference type="VGNC" id="VGNC:55771">
    <property type="gene designation" value="ANAPC11"/>
</dbReference>
<dbReference type="eggNOG" id="KOG1493">
    <property type="taxonomic scope" value="Eukaryota"/>
</dbReference>
<dbReference type="GeneTree" id="ENSGT00550000075186"/>
<dbReference type="HOGENOM" id="CLU_115512_0_2_1"/>
<dbReference type="InParanoid" id="Q3ZCF6"/>
<dbReference type="OMA" id="QWRWDTG"/>
<dbReference type="OrthoDB" id="1681166at2759"/>
<dbReference type="TreeFam" id="TF354219"/>
<dbReference type="Reactome" id="R-BTA-141430">
    <property type="pathway name" value="Inactivation of APC/C via direct inhibition of the APC/C complex"/>
</dbReference>
<dbReference type="Reactome" id="R-BTA-174048">
    <property type="pathway name" value="APC/C:Cdc20 mediated degradation of Cyclin B"/>
</dbReference>
<dbReference type="Reactome" id="R-BTA-174084">
    <property type="pathway name" value="Autodegradation of Cdh1 by Cdh1:APC/C"/>
</dbReference>
<dbReference type="Reactome" id="R-BTA-174154">
    <property type="pathway name" value="APC/C:Cdc20 mediated degradation of Securin"/>
</dbReference>
<dbReference type="Reactome" id="R-BTA-174178">
    <property type="pathway name" value="APC/C:Cdh1 mediated degradation of Cdc20 and other APC/C:Cdh1 targeted proteins in late mitosis/early G1"/>
</dbReference>
<dbReference type="Reactome" id="R-BTA-174184">
    <property type="pathway name" value="Cdc20:Phospho-APC/C mediated degradation of Cyclin A"/>
</dbReference>
<dbReference type="Reactome" id="R-BTA-176407">
    <property type="pathway name" value="Conversion from APC/C:Cdc20 to APC/C:Cdh1 in late anaphase"/>
</dbReference>
<dbReference type="Reactome" id="R-BTA-176408">
    <property type="pathway name" value="Regulation of APC/C activators between G1/S and early anaphase"/>
</dbReference>
<dbReference type="Reactome" id="R-BTA-176409">
    <property type="pathway name" value="APC/C:Cdc20 mediated degradation of mitotic proteins"/>
</dbReference>
<dbReference type="Reactome" id="R-BTA-176412">
    <property type="pathway name" value="Phosphorylation of the APC/C"/>
</dbReference>
<dbReference type="Reactome" id="R-BTA-179409">
    <property type="pathway name" value="APC-Cdc20 mediated degradation of Nek2A"/>
</dbReference>
<dbReference type="Reactome" id="R-BTA-2467813">
    <property type="pathway name" value="Separation of Sister Chromatids"/>
</dbReference>
<dbReference type="Reactome" id="R-BTA-2559582">
    <property type="pathway name" value="Senescence-Associated Secretory Phenotype (SASP)"/>
</dbReference>
<dbReference type="Reactome" id="R-BTA-68867">
    <property type="pathway name" value="Assembly of the pre-replicative complex"/>
</dbReference>
<dbReference type="Reactome" id="R-BTA-69017">
    <property type="pathway name" value="CDK-mediated phosphorylation and removal of Cdc6"/>
</dbReference>
<dbReference type="Reactome" id="R-BTA-983168">
    <property type="pathway name" value="Antigen processing: Ubiquitination &amp; Proteasome degradation"/>
</dbReference>
<dbReference type="UniPathway" id="UPA00143"/>
<dbReference type="Proteomes" id="UP000009136">
    <property type="component" value="Chromosome 19"/>
</dbReference>
<dbReference type="Bgee" id="ENSBTAG00000001937">
    <property type="expression patterns" value="Expressed in digestive system secreted substance and 105 other cell types or tissues"/>
</dbReference>
<dbReference type="GO" id="GO:0005680">
    <property type="term" value="C:anaphase-promoting complex"/>
    <property type="evidence" value="ECO:0000250"/>
    <property type="project" value="UniProtKB"/>
</dbReference>
<dbReference type="GO" id="GO:0005737">
    <property type="term" value="C:cytoplasm"/>
    <property type="evidence" value="ECO:0007669"/>
    <property type="project" value="UniProtKB-SubCell"/>
</dbReference>
<dbReference type="GO" id="GO:0005634">
    <property type="term" value="C:nucleus"/>
    <property type="evidence" value="ECO:0000318"/>
    <property type="project" value="GO_Central"/>
</dbReference>
<dbReference type="GO" id="GO:0097602">
    <property type="term" value="F:cullin family protein binding"/>
    <property type="evidence" value="ECO:0000318"/>
    <property type="project" value="GO_Central"/>
</dbReference>
<dbReference type="GO" id="GO:0061630">
    <property type="term" value="F:ubiquitin protein ligase activity"/>
    <property type="evidence" value="ECO:0000318"/>
    <property type="project" value="GO_Central"/>
</dbReference>
<dbReference type="GO" id="GO:0008270">
    <property type="term" value="F:zinc ion binding"/>
    <property type="evidence" value="ECO:0007669"/>
    <property type="project" value="UniProtKB-KW"/>
</dbReference>
<dbReference type="GO" id="GO:0031145">
    <property type="term" value="P:anaphase-promoting complex-dependent catabolic process"/>
    <property type="evidence" value="ECO:0000250"/>
    <property type="project" value="UniProtKB"/>
</dbReference>
<dbReference type="GO" id="GO:0051301">
    <property type="term" value="P:cell division"/>
    <property type="evidence" value="ECO:0007669"/>
    <property type="project" value="UniProtKB-KW"/>
</dbReference>
<dbReference type="GO" id="GO:0045842">
    <property type="term" value="P:positive regulation of mitotic metaphase/anaphase transition"/>
    <property type="evidence" value="ECO:0000318"/>
    <property type="project" value="GO_Central"/>
</dbReference>
<dbReference type="GO" id="GO:0141198">
    <property type="term" value="P:protein branched polyubiquitination"/>
    <property type="evidence" value="ECO:0000250"/>
    <property type="project" value="UniProtKB"/>
</dbReference>
<dbReference type="GO" id="GO:0070979">
    <property type="term" value="P:protein K11-linked ubiquitination"/>
    <property type="evidence" value="ECO:0000250"/>
    <property type="project" value="UniProtKB"/>
</dbReference>
<dbReference type="GO" id="GO:0070936">
    <property type="term" value="P:protein K48-linked ubiquitination"/>
    <property type="evidence" value="ECO:0000250"/>
    <property type="project" value="UniProtKB"/>
</dbReference>
<dbReference type="GO" id="GO:0016567">
    <property type="term" value="P:protein ubiquitination"/>
    <property type="evidence" value="ECO:0000318"/>
    <property type="project" value="GO_Central"/>
</dbReference>
<dbReference type="GO" id="GO:0006511">
    <property type="term" value="P:ubiquitin-dependent protein catabolic process"/>
    <property type="evidence" value="ECO:0000318"/>
    <property type="project" value="GO_Central"/>
</dbReference>
<dbReference type="CDD" id="cd16456">
    <property type="entry name" value="RING-H2_APC11"/>
    <property type="match status" value="1"/>
</dbReference>
<dbReference type="FunFam" id="3.30.40.10:FF:000111">
    <property type="entry name" value="Anaphase-promoting complex subunit 11"/>
    <property type="match status" value="1"/>
</dbReference>
<dbReference type="Gene3D" id="3.30.40.10">
    <property type="entry name" value="Zinc/RING finger domain, C3HC4 (zinc finger)"/>
    <property type="match status" value="1"/>
</dbReference>
<dbReference type="InterPro" id="IPR051031">
    <property type="entry name" value="RING-box_E3_Ubiquitin_Ligase"/>
</dbReference>
<dbReference type="InterPro" id="IPR024991">
    <property type="entry name" value="RING-H2_APC11"/>
</dbReference>
<dbReference type="InterPro" id="IPR001841">
    <property type="entry name" value="Znf_RING"/>
</dbReference>
<dbReference type="InterPro" id="IPR013083">
    <property type="entry name" value="Znf_RING/FYVE/PHD"/>
</dbReference>
<dbReference type="PANTHER" id="PTHR11210">
    <property type="entry name" value="RING BOX"/>
    <property type="match status" value="1"/>
</dbReference>
<dbReference type="Pfam" id="PF12861">
    <property type="entry name" value="zf-ANAPC11"/>
    <property type="match status" value="1"/>
</dbReference>
<dbReference type="SUPFAM" id="SSF57850">
    <property type="entry name" value="RING/U-box"/>
    <property type="match status" value="1"/>
</dbReference>
<dbReference type="PROSITE" id="PS50089">
    <property type="entry name" value="ZF_RING_2"/>
    <property type="match status" value="1"/>
</dbReference>
<reference key="1">
    <citation type="submission" date="2005-08" db="EMBL/GenBank/DDBJ databases">
        <authorList>
            <consortium name="NIH - Mammalian Gene Collection (MGC) project"/>
        </authorList>
    </citation>
    <scope>NUCLEOTIDE SEQUENCE [LARGE SCALE MRNA]</scope>
    <source>
        <strain>Crossbred X Angus</strain>
        <tissue>Ileum</tissue>
    </source>
</reference>
<organism>
    <name type="scientific">Bos taurus</name>
    <name type="common">Bovine</name>
    <dbReference type="NCBI Taxonomy" id="9913"/>
    <lineage>
        <taxon>Eukaryota</taxon>
        <taxon>Metazoa</taxon>
        <taxon>Chordata</taxon>
        <taxon>Craniata</taxon>
        <taxon>Vertebrata</taxon>
        <taxon>Euteleostomi</taxon>
        <taxon>Mammalia</taxon>
        <taxon>Eutheria</taxon>
        <taxon>Laurasiatheria</taxon>
        <taxon>Artiodactyla</taxon>
        <taxon>Ruminantia</taxon>
        <taxon>Pecora</taxon>
        <taxon>Bovidae</taxon>
        <taxon>Bovinae</taxon>
        <taxon>Bos</taxon>
    </lineage>
</organism>
<proteinExistence type="inferred from homology"/>
<accession>Q3ZCF6</accession>
<name>APC11_BOVIN</name>
<comment type="function">
    <text evidence="2">Together with the cullin protein ANAPC2, constitutes the catalytic component of the anaphase promoting complex/cyclosome (APC/C), a cell cycle-regulated E3 ubiquitin ligase that controls progression through mitosis and the G1 phase of the cell cycle. The APC/C complex acts by mediating ubiquitination and subsequent degradation of target proteins: it mainly mediates the formation of 'Lys-11'-linked polyubiquitin chains and, to a lower extent, the formation of 'Lys-48'- and 'Lys-63'-linked polyubiquitin chains. The APC/C complex catalyzes assembly of branched 'Lys-11'-/'Lys-48'-linked branched ubiquitin chains on target proteins. May recruit the E2 ubiquitin-conjugating enzymes to the complex.</text>
</comment>
<comment type="pathway">
    <text evidence="2">Protein modification; protein ubiquitination.</text>
</comment>
<comment type="subunit">
    <text evidence="2">The mammalian APC/C is composed at least of 14 distinct subunits ANAPC1, ANAPC2, CDC27/APC3, ANAPC4, ANAPC5, CDC16/APC6, ANAPC7, CDC23/APC8, ANAPC10, ANAPC11, CDC26/APC12, ANAPC13, ANAPC15 and ANAPC16 that assemble into a complex of at least 19 chains with a combined molecular mass of around 1.2 MDa; APC/C interacts with FZR1 and FBXO5. Interacts with the cullin domain of ANAPC2. Interacts with UBE2D2.</text>
</comment>
<comment type="subcellular location">
    <subcellularLocation>
        <location evidence="1">Cytoplasm</location>
    </subcellularLocation>
    <subcellularLocation>
        <location evidence="1">Nucleus</location>
    </subcellularLocation>
</comment>
<comment type="domain">
    <text evidence="1">The RING-type zinc finger domain coordinates an additional third zinc ion.</text>
</comment>
<comment type="PTM">
    <text evidence="1">Auto-ubiquitinated.</text>
</comment>
<comment type="similarity">
    <text evidence="4">Belongs to the RING-box family.</text>
</comment>
<keyword id="KW-0131">Cell cycle</keyword>
<keyword id="KW-0132">Cell division</keyword>
<keyword id="KW-0963">Cytoplasm</keyword>
<keyword id="KW-0479">Metal-binding</keyword>
<keyword id="KW-0498">Mitosis</keyword>
<keyword id="KW-0539">Nucleus</keyword>
<keyword id="KW-1185">Reference proteome</keyword>
<keyword id="KW-0832">Ubl conjugation</keyword>
<keyword id="KW-0833">Ubl conjugation pathway</keyword>
<keyword id="KW-0862">Zinc</keyword>
<keyword id="KW-0863">Zinc-finger</keyword>
<gene>
    <name type="primary">ANAPC11</name>
</gene>
<sequence>MRVKIKCWNGVATWLWVANDENCGICRMAFNGCCPDCKVPGDDCPLVWGQCSHCFHMHCILKWLNAQQVQQHCPMCRQEWKFKE</sequence>
<feature type="chain" id="PRO_0000284053" description="Anaphase-promoting complex subunit 11">
    <location>
        <begin position="1"/>
        <end position="84"/>
    </location>
</feature>
<feature type="zinc finger region" description="RING-type" evidence="3">
    <location>
        <begin position="34"/>
        <end position="77"/>
    </location>
</feature>
<feature type="binding site" evidence="1">
    <location>
        <position position="23"/>
    </location>
    <ligand>
        <name>Zn(2+)</name>
        <dbReference type="ChEBI" id="CHEBI:29105"/>
        <label>1</label>
    </ligand>
</feature>
<feature type="binding site" evidence="1">
    <location>
        <position position="26"/>
    </location>
    <ligand>
        <name>Zn(2+)</name>
        <dbReference type="ChEBI" id="CHEBI:29105"/>
        <label>1</label>
    </ligand>
</feature>
<feature type="binding site" evidence="1">
    <location>
        <position position="34"/>
    </location>
    <ligand>
        <name>Zn(2+)</name>
        <dbReference type="ChEBI" id="CHEBI:29105"/>
        <label>3</label>
    </ligand>
</feature>
<feature type="binding site" evidence="1">
    <location>
        <position position="37"/>
    </location>
    <ligand>
        <name>Zn(2+)</name>
        <dbReference type="ChEBI" id="CHEBI:29105"/>
        <label>3</label>
    </ligand>
</feature>
<feature type="binding site" evidence="1">
    <location>
        <position position="44"/>
    </location>
    <ligand>
        <name>Zn(2+)</name>
        <dbReference type="ChEBI" id="CHEBI:29105"/>
        <label>3</label>
    </ligand>
</feature>
<feature type="binding site" evidence="1">
    <location>
        <position position="51"/>
    </location>
    <ligand>
        <name>Zn(2+)</name>
        <dbReference type="ChEBI" id="CHEBI:29105"/>
        <label>2</label>
    </ligand>
</feature>
<feature type="binding site" evidence="1">
    <location>
        <position position="53"/>
    </location>
    <ligand>
        <name>Zn(2+)</name>
        <dbReference type="ChEBI" id="CHEBI:29105"/>
        <label>2</label>
    </ligand>
</feature>
<feature type="binding site" evidence="1">
    <location>
        <position position="56"/>
    </location>
    <ligand>
        <name>Zn(2+)</name>
        <dbReference type="ChEBI" id="CHEBI:29105"/>
        <label>1</label>
    </ligand>
</feature>
<feature type="binding site" evidence="1">
    <location>
        <position position="58"/>
    </location>
    <ligand>
        <name>Zn(2+)</name>
        <dbReference type="ChEBI" id="CHEBI:29105"/>
        <label>3</label>
    </ligand>
</feature>
<feature type="binding site" evidence="1">
    <location>
        <position position="59"/>
    </location>
    <ligand>
        <name>Zn(2+)</name>
        <dbReference type="ChEBI" id="CHEBI:29105"/>
        <label>1</label>
    </ligand>
</feature>
<feature type="binding site" evidence="1">
    <location>
        <position position="73"/>
    </location>
    <ligand>
        <name>Zn(2+)</name>
        <dbReference type="ChEBI" id="CHEBI:29105"/>
        <label>2</label>
    </ligand>
</feature>
<feature type="binding site" evidence="1">
    <location>
        <position position="76"/>
    </location>
    <ligand>
        <name>Zn(2+)</name>
        <dbReference type="ChEBI" id="CHEBI:29105"/>
        <label>2</label>
    </ligand>
</feature>
<evidence type="ECO:0000250" key="1"/>
<evidence type="ECO:0000250" key="2">
    <source>
        <dbReference type="UniProtKB" id="Q9NYG5"/>
    </source>
</evidence>
<evidence type="ECO:0000255" key="3">
    <source>
        <dbReference type="PROSITE-ProRule" id="PRU00175"/>
    </source>
</evidence>
<evidence type="ECO:0000305" key="4"/>
<protein>
    <recommendedName>
        <fullName>Anaphase-promoting complex subunit 11</fullName>
        <shortName>APC11</shortName>
    </recommendedName>
    <alternativeName>
        <fullName>Cyclosome subunit 11</fullName>
    </alternativeName>
</protein>